<comment type="function">
    <text evidence="6">Lipoxygenase that metabolizes linoleic and alpha-linolenic acids to 9-, 11- and 13-hydroperoxy fatty acids. Oxidizes linoleic acid to mainly 11R-, 13S- and racemic 9-HPODE, and alpha-linolenic acid to 11-HPOTrE.</text>
</comment>
<comment type="catalytic activity">
    <reaction evidence="2">
        <text>(9Z,12Z)-octadecadienoate + O2 = (11S)-hydroperoxy-(9Z,12Z)-octadecadienoate</text>
        <dbReference type="Rhea" id="RHEA:18993"/>
        <dbReference type="ChEBI" id="CHEBI:15379"/>
        <dbReference type="ChEBI" id="CHEBI:30245"/>
        <dbReference type="ChEBI" id="CHEBI:57467"/>
        <dbReference type="EC" id="1.13.11.45"/>
    </reaction>
</comment>
<comment type="catalytic activity">
    <reaction evidence="6">
        <text>(9Z,12Z)-octadecadienoate + O2 = (11R)-hydroperoxy-(9Z,12Z)-octadecadienoate</text>
        <dbReference type="Rhea" id="RHEA:51640"/>
        <dbReference type="ChEBI" id="CHEBI:15379"/>
        <dbReference type="ChEBI" id="CHEBI:30245"/>
        <dbReference type="ChEBI" id="CHEBI:134248"/>
    </reaction>
</comment>
<comment type="catalytic activity">
    <reaction evidence="6">
        <text>(9Z,12Z)-octadecadienoate + O2 = (13S)-hydroperoxy-(9Z,11E)-octadecadienoate</text>
        <dbReference type="Rhea" id="RHEA:22780"/>
        <dbReference type="ChEBI" id="CHEBI:15379"/>
        <dbReference type="ChEBI" id="CHEBI:30245"/>
        <dbReference type="ChEBI" id="CHEBI:57466"/>
    </reaction>
</comment>
<comment type="catalytic activity">
    <reaction evidence="6">
        <text>(9Z,12Z,15Z)-octadecatrienoate + O2 = (11S)-hydroperoxy-(9Z,12Z,15Z)-octadecatrienoate</text>
        <dbReference type="Rhea" id="RHEA:51440"/>
        <dbReference type="ChEBI" id="CHEBI:15379"/>
        <dbReference type="ChEBI" id="CHEBI:32387"/>
        <dbReference type="ChEBI" id="CHEBI:134110"/>
    </reaction>
</comment>
<comment type="cofactor">
    <cofactor evidence="6">
        <name>Mn(2+)</name>
        <dbReference type="ChEBI" id="CHEBI:29035"/>
    </cofactor>
    <text evidence="2">Three His residues, the carboxyl oxygen of the C-terminal Ile or Val residue, and a fifth residue, usually Asn, ligate the metal, which binds water to form a catalytic base Mn(2+)OH(2) for hydrogen abstraction.</text>
</comment>
<comment type="biophysicochemical properties">
    <kinetics>
        <KM evidence="6">29 uM for linoleate</KM>
    </kinetics>
</comment>
<comment type="subcellular location">
    <subcellularLocation>
        <location evidence="2">Secreted</location>
    </subcellularLocation>
</comment>
<comment type="PTM">
    <text evidence="6">N- and O-glycosylated.</text>
</comment>
<comment type="similarity">
    <text evidence="8">Belongs to the lipoxygenase family. Manganese lipoxygenase subfamily.</text>
</comment>
<sequence length="610" mass="67941">MVALLIFLGIFTCVETLPLSDSPSSYIPEEVPSSQTADIGLPPPTEFTLPNEDDEILIRKLNIQKTRKEILYGPSLIGKTSFFISGPLGDQISQRDQTLWSRDAAPVVQAVSHDAAAALHDIQIHGGLQNLDDYKILYQGHWSSSVPGGIAKGQFSNFTSDLLFSMERLSTNPYILRRLHPHADELPFAVDSKIVQKLTGSTLPSLHKAGRLFLADHSYQKDYVAQEGRYAAACQALFYLDDRCHQFLPLAIKTNVGSNLTYTPLDEPNDWLLAKVMFNVNDLFHGQMYHLASTHAVAEIVHLAALRTMSSRHPVLALLQRLMYQAYAIRPIGNNILFNPGGLIDQNSVFSNVAVRKFATDFYPTVAGPVRSNYFEANLRSRGLLNATHGPDLPHFPFYEDGARIIKVIRTFIQSFVKSIYKSDKVLAKDWELQAWIAEANGAAEVIDFPPTPLKKRKHLVDILTHMAWLTGVSHHVLNQGEPVTTSGVLPLHPGSLYAPVPGEKGVVDSLLPWLPNEQKSVDQISFLALFNRPQIVENNRTLRYMFNSESLLAGTVRAVAAANERFMEEMGHISQEISNRKFDDDGLSQGMPFIWTGMDPGVIPFYLSV</sequence>
<gene>
    <name type="ORF">FOXB_09004</name>
</gene>
<accession>F9FRH4</accession>
<feature type="signal peptide" evidence="3">
    <location>
        <begin position="1"/>
        <end position="16"/>
    </location>
</feature>
<feature type="chain" id="PRO_5003383224" description="Manganese lipoxygenase" evidence="3">
    <location>
        <begin position="17"/>
        <end position="610"/>
    </location>
</feature>
<feature type="domain" description="Lipoxygenase" evidence="5">
    <location>
        <begin position="47"/>
        <end position="610"/>
    </location>
</feature>
<feature type="binding site" evidence="1">
    <location>
        <position position="290"/>
    </location>
    <ligand>
        <name>Mn(2+)</name>
        <dbReference type="ChEBI" id="CHEBI:29035"/>
        <note>catalytic</note>
    </ligand>
</feature>
<feature type="binding site" evidence="1">
    <location>
        <position position="295"/>
    </location>
    <ligand>
        <name>Mn(2+)</name>
        <dbReference type="ChEBI" id="CHEBI:29035"/>
        <note>catalytic</note>
    </ligand>
</feature>
<feature type="binding site" evidence="1">
    <location>
        <position position="475"/>
    </location>
    <ligand>
        <name>Mn(2+)</name>
        <dbReference type="ChEBI" id="CHEBI:29035"/>
        <note>catalytic</note>
    </ligand>
</feature>
<feature type="binding site" evidence="1">
    <location>
        <position position="479"/>
    </location>
    <ligand>
        <name>Mn(2+)</name>
        <dbReference type="ChEBI" id="CHEBI:29035"/>
        <note>catalytic</note>
    </ligand>
</feature>
<feature type="binding site" evidence="1">
    <location>
        <position position="610"/>
    </location>
    <ligand>
        <name>Mn(2+)</name>
        <dbReference type="ChEBI" id="CHEBI:29035"/>
        <note>catalytic</note>
    </ligand>
</feature>
<feature type="glycosylation site" description="N-linked (GlcNAc...) asparagine" evidence="4">
    <location>
        <position position="157"/>
    </location>
</feature>
<feature type="glycosylation site" description="N-linked (GlcNAc...) asparagine" evidence="4">
    <location>
        <position position="259"/>
    </location>
</feature>
<feature type="glycosylation site" description="N-linked (GlcNAc...) asparagine" evidence="4">
    <location>
        <position position="386"/>
    </location>
</feature>
<feature type="glycosylation site" description="N-linked (GlcNAc...) asparagine" evidence="4">
    <location>
        <position position="540"/>
    </location>
</feature>
<feature type="mutagenesis site" description="Changes the stereospecificity of the enzyme from 11R-, 13S- and racemic 9-HPODE to 11S-, 13R- and 9S-HPODE." evidence="6">
    <original>S</original>
    <variation>F</variation>
    <location>
        <position position="348"/>
    </location>
</feature>
<feature type="mutagenesis site" description="No effect." evidence="6">
    <original>L</original>
    <variation>R</variation>
    <location>
        <position position="530"/>
    </location>
</feature>
<reference key="1">
    <citation type="journal article" date="2012" name="Mol. Plant Microbe Interact.">
        <title>A highly conserved effector in Fusarium oxysporum is required for full virulence on Arabidopsis.</title>
        <authorList>
            <person name="Thatcher L.F."/>
            <person name="Gardiner D.M."/>
            <person name="Kazan K."/>
            <person name="Manners J."/>
        </authorList>
    </citation>
    <scope>NUCLEOTIDE SEQUENCE [LARGE SCALE GENOMIC DNA]</scope>
    <source>
        <strain>Fo5176</strain>
    </source>
</reference>
<reference key="2">
    <citation type="journal article" date="2015" name="J. Lipid Res.">
        <title>Manganese lipoxygenase of F. oxysporum and the structural basis for biosynthesis of distinct 11-hydroperoxy stereoisomers.</title>
        <authorList>
            <person name="Wennman A."/>
            <person name="Magnuson A."/>
            <person name="Hamberg M."/>
            <person name="Oliw E.H."/>
        </authorList>
    </citation>
    <scope>FUNCTION</scope>
    <scope>CATALYTIC ACTIVITY</scope>
    <scope>BIOPHYSICOCHEMICAL PROPERTIES</scope>
    <scope>COFACTOR</scope>
    <scope>GLYCOSYLATION</scope>
    <scope>MUTAGENESIS OF SER-348 AND LEU-530</scope>
</reference>
<keyword id="KW-0223">Dioxygenase</keyword>
<keyword id="KW-0325">Glycoprotein</keyword>
<keyword id="KW-0464">Manganese</keyword>
<keyword id="KW-0479">Metal-binding</keyword>
<keyword id="KW-0560">Oxidoreductase</keyword>
<keyword id="KW-1185">Reference proteome</keyword>
<keyword id="KW-0964">Secreted</keyword>
<keyword id="KW-0732">Signal</keyword>
<evidence type="ECO:0000250" key="1">
    <source>
        <dbReference type="UniProtKB" id="G4NAP4"/>
    </source>
</evidence>
<evidence type="ECO:0000250" key="2">
    <source>
        <dbReference type="UniProtKB" id="Q8X151"/>
    </source>
</evidence>
<evidence type="ECO:0000255" key="3"/>
<evidence type="ECO:0000255" key="4">
    <source>
        <dbReference type="PROSITE-ProRule" id="PRU00498"/>
    </source>
</evidence>
<evidence type="ECO:0000255" key="5">
    <source>
        <dbReference type="PROSITE-ProRule" id="PRU00726"/>
    </source>
</evidence>
<evidence type="ECO:0000269" key="6">
    <source>
    </source>
</evidence>
<evidence type="ECO:0000303" key="7">
    <source>
    </source>
</evidence>
<evidence type="ECO:0000305" key="8"/>
<dbReference type="EC" id="1.13.11.-" evidence="6"/>
<dbReference type="EC" id="1.13.11.45"/>
<dbReference type="EMBL" id="AFQF01002523">
    <property type="protein sequence ID" value="EGU80482.1"/>
    <property type="molecule type" value="Genomic_DNA"/>
</dbReference>
<dbReference type="SMR" id="F9FRH4"/>
<dbReference type="STRING" id="660025.F9FRH4"/>
<dbReference type="SABIO-RK" id="F9FRH4"/>
<dbReference type="Proteomes" id="UP000002489">
    <property type="component" value="Unassembled WGS sequence"/>
</dbReference>
<dbReference type="GO" id="GO:0005576">
    <property type="term" value="C:extracellular region"/>
    <property type="evidence" value="ECO:0007669"/>
    <property type="project" value="UniProtKB-SubCell"/>
</dbReference>
<dbReference type="GO" id="GO:0050584">
    <property type="term" value="F:linoleate 11-lipoxygenase activity"/>
    <property type="evidence" value="ECO:0007669"/>
    <property type="project" value="UniProtKB-EC"/>
</dbReference>
<dbReference type="GO" id="GO:0016165">
    <property type="term" value="F:linoleate 13S-lipoxygenase activity"/>
    <property type="evidence" value="ECO:0007669"/>
    <property type="project" value="RHEA"/>
</dbReference>
<dbReference type="GO" id="GO:0046872">
    <property type="term" value="F:metal ion binding"/>
    <property type="evidence" value="ECO:0007669"/>
    <property type="project" value="UniProtKB-KW"/>
</dbReference>
<dbReference type="GO" id="GO:0043651">
    <property type="term" value="P:linoleic acid metabolic process"/>
    <property type="evidence" value="ECO:0007669"/>
    <property type="project" value="UniProtKB-ARBA"/>
</dbReference>
<dbReference type="GO" id="GO:0034440">
    <property type="term" value="P:lipid oxidation"/>
    <property type="evidence" value="ECO:0007669"/>
    <property type="project" value="InterPro"/>
</dbReference>
<dbReference type="Gene3D" id="3.10.450.60">
    <property type="match status" value="1"/>
</dbReference>
<dbReference type="Gene3D" id="1.20.245.10">
    <property type="entry name" value="Lipoxygenase-1, Domain 5"/>
    <property type="match status" value="1"/>
</dbReference>
<dbReference type="InterPro" id="IPR000907">
    <property type="entry name" value="LipOase"/>
</dbReference>
<dbReference type="InterPro" id="IPR013819">
    <property type="entry name" value="LipOase_C"/>
</dbReference>
<dbReference type="InterPro" id="IPR036226">
    <property type="entry name" value="LipOase_C_sf"/>
</dbReference>
<dbReference type="PANTHER" id="PTHR11771">
    <property type="entry name" value="LIPOXYGENASE"/>
    <property type="match status" value="1"/>
</dbReference>
<dbReference type="Pfam" id="PF00305">
    <property type="entry name" value="Lipoxygenase"/>
    <property type="match status" value="1"/>
</dbReference>
<dbReference type="SUPFAM" id="SSF48484">
    <property type="entry name" value="Lipoxigenase"/>
    <property type="match status" value="1"/>
</dbReference>
<dbReference type="PROSITE" id="PS51393">
    <property type="entry name" value="LIPOXYGENASE_3"/>
    <property type="match status" value="1"/>
</dbReference>
<name>MNLOX_FUSOF</name>
<proteinExistence type="evidence at protein level"/>
<protein>
    <recommendedName>
        <fullName evidence="7">Manganese lipoxygenase</fullName>
        <shortName evidence="7">MnLOX</shortName>
        <ecNumber evidence="6">1.13.11.-</ecNumber>
        <ecNumber>1.13.11.45</ecNumber>
    </recommendedName>
    <alternativeName>
        <fullName>Manganese 11R/13S-lipoxygenase</fullName>
        <shortName>11R/13S-MnLOX</shortName>
    </alternativeName>
</protein>
<organism>
    <name type="scientific">Fusarium oxysporum (strain Fo5176)</name>
    <name type="common">Fusarium vascular wilt</name>
    <dbReference type="NCBI Taxonomy" id="660025"/>
    <lineage>
        <taxon>Eukaryota</taxon>
        <taxon>Fungi</taxon>
        <taxon>Dikarya</taxon>
        <taxon>Ascomycota</taxon>
        <taxon>Pezizomycotina</taxon>
        <taxon>Sordariomycetes</taxon>
        <taxon>Hypocreomycetidae</taxon>
        <taxon>Hypocreales</taxon>
        <taxon>Nectriaceae</taxon>
        <taxon>Fusarium</taxon>
        <taxon>Fusarium oxysporum species complex</taxon>
    </lineage>
</organism>